<organismHost>
    <name type="scientific">Aves</name>
    <dbReference type="NCBI Taxonomy" id="8782"/>
</organismHost>
<organismHost>
    <name type="scientific">Homo sapiens</name>
    <name type="common">Human</name>
    <dbReference type="NCBI Taxonomy" id="9606"/>
</organismHost>
<organismHost>
    <name type="scientific">Sus scrofa</name>
    <name type="common">Pig</name>
    <dbReference type="NCBI Taxonomy" id="9823"/>
</organismHost>
<organism>
    <name type="scientific">Influenza A virus (strain A/Taiwan/1/1986 H1N1)</name>
    <dbReference type="NCBI Taxonomy" id="380213"/>
    <lineage>
        <taxon>Viruses</taxon>
        <taxon>Riboviria</taxon>
        <taxon>Orthornavirae</taxon>
        <taxon>Negarnaviricota</taxon>
        <taxon>Polyploviricotina</taxon>
        <taxon>Insthoviricetes</taxon>
        <taxon>Articulavirales</taxon>
        <taxon>Orthomyxoviridae</taxon>
        <taxon>Alphainfluenzavirus</taxon>
        <taxon>Alphainfluenzavirus influenzae</taxon>
        <taxon>Influenza A virus</taxon>
    </lineage>
</organism>
<keyword id="KW-1167">Clathrin- and caveolin-independent endocytosis of virus by host</keyword>
<keyword id="KW-1165">Clathrin-mediated endocytosis of virus by host</keyword>
<keyword id="KW-1015">Disulfide bond</keyword>
<keyword id="KW-1170">Fusion of virus membrane with host endosomal membrane</keyword>
<keyword id="KW-1168">Fusion of virus membrane with host membrane</keyword>
<keyword id="KW-0325">Glycoprotein</keyword>
<keyword id="KW-0348">Hemagglutinin</keyword>
<keyword id="KW-1032">Host cell membrane</keyword>
<keyword id="KW-1043">Host membrane</keyword>
<keyword id="KW-0945">Host-virus interaction</keyword>
<keyword id="KW-0449">Lipoprotein</keyword>
<keyword id="KW-0472">Membrane</keyword>
<keyword id="KW-0564">Palmitate</keyword>
<keyword id="KW-0732">Signal</keyword>
<keyword id="KW-0812">Transmembrane</keyword>
<keyword id="KW-1161">Viral attachment to host cell</keyword>
<keyword id="KW-0261">Viral envelope protein</keyword>
<keyword id="KW-1162">Viral penetration into host cytoplasm</keyword>
<keyword id="KW-0946">Virion</keyword>
<keyword id="KW-1164">Virus endocytosis by host</keyword>
<keyword id="KW-1160">Virus entry into host cell</keyword>
<gene>
    <name type="primary">HA</name>
</gene>
<proteinExistence type="inferred from homology"/>
<protein>
    <recommendedName>
        <fullName>Hemagglutinin</fullName>
    </recommendedName>
    <component>
        <recommendedName>
            <fullName>Hemagglutinin HA1 chain</fullName>
        </recommendedName>
    </component>
</protein>
<evidence type="ECO:0000250" key="1"/>
<evidence type="ECO:0000255" key="2"/>
<evidence type="ECO:0000305" key="3"/>
<dbReference type="EMBL" id="X17224">
    <property type="protein sequence ID" value="CAA35097.1"/>
    <property type="molecule type" value="Genomic_RNA"/>
</dbReference>
<dbReference type="PIR" id="A26765">
    <property type="entry name" value="HMIVTA"/>
</dbReference>
<dbReference type="SMR" id="P12590"/>
<dbReference type="BindingDB" id="P12590"/>
<dbReference type="GlyCosmos" id="P12590">
    <property type="glycosylation" value="9 sites, No reported glycans"/>
</dbReference>
<dbReference type="GO" id="GO:0020002">
    <property type="term" value="C:host cell plasma membrane"/>
    <property type="evidence" value="ECO:0007669"/>
    <property type="project" value="UniProtKB-SubCell"/>
</dbReference>
<dbReference type="GO" id="GO:0016020">
    <property type="term" value="C:membrane"/>
    <property type="evidence" value="ECO:0007669"/>
    <property type="project" value="UniProtKB-KW"/>
</dbReference>
<dbReference type="GO" id="GO:0019031">
    <property type="term" value="C:viral envelope"/>
    <property type="evidence" value="ECO:0007669"/>
    <property type="project" value="UniProtKB-KW"/>
</dbReference>
<dbReference type="GO" id="GO:0055036">
    <property type="term" value="C:virion membrane"/>
    <property type="evidence" value="ECO:0007669"/>
    <property type="project" value="UniProtKB-SubCell"/>
</dbReference>
<dbReference type="GO" id="GO:0046789">
    <property type="term" value="F:host cell surface receptor binding"/>
    <property type="evidence" value="ECO:0007669"/>
    <property type="project" value="InterPro"/>
</dbReference>
<dbReference type="GO" id="GO:0075512">
    <property type="term" value="P:clathrin-dependent endocytosis of virus by host cell"/>
    <property type="evidence" value="ECO:0007669"/>
    <property type="project" value="UniProtKB-KW"/>
</dbReference>
<dbReference type="GO" id="GO:0039654">
    <property type="term" value="P:fusion of virus membrane with host endosome membrane"/>
    <property type="evidence" value="ECO:0007669"/>
    <property type="project" value="UniProtKB-KW"/>
</dbReference>
<dbReference type="GO" id="GO:0019064">
    <property type="term" value="P:fusion of virus membrane with host plasma membrane"/>
    <property type="evidence" value="ECO:0007669"/>
    <property type="project" value="InterPro"/>
</dbReference>
<dbReference type="GO" id="GO:0019062">
    <property type="term" value="P:virion attachment to host cell"/>
    <property type="evidence" value="ECO:0007669"/>
    <property type="project" value="UniProtKB-KW"/>
</dbReference>
<dbReference type="Gene3D" id="3.90.209.20">
    <property type="match status" value="1"/>
</dbReference>
<dbReference type="Gene3D" id="2.10.77.10">
    <property type="entry name" value="Hemagglutinin Chain A, Domain 2"/>
    <property type="match status" value="1"/>
</dbReference>
<dbReference type="InterPro" id="IPR008980">
    <property type="entry name" value="Capsid_hemagglutn"/>
</dbReference>
<dbReference type="InterPro" id="IPR013828">
    <property type="entry name" value="Hemagglutn_HA1_a/b_dom_sf"/>
</dbReference>
<dbReference type="InterPro" id="IPR000149">
    <property type="entry name" value="Hemagglutn_influenz_A"/>
</dbReference>
<dbReference type="InterPro" id="IPR001364">
    <property type="entry name" value="Hemagglutn_influenz_A/B"/>
</dbReference>
<dbReference type="Pfam" id="PF00509">
    <property type="entry name" value="Hemagglutinin"/>
    <property type="match status" value="1"/>
</dbReference>
<dbReference type="PRINTS" id="PR00330">
    <property type="entry name" value="HEMAGGLUTN1"/>
</dbReference>
<dbReference type="PRINTS" id="PR00329">
    <property type="entry name" value="HEMAGGLUTN12"/>
</dbReference>
<dbReference type="SUPFAM" id="SSF49818">
    <property type="entry name" value="Viral protein domain"/>
    <property type="match status" value="1"/>
</dbReference>
<feature type="signal peptide" evidence="2">
    <location>
        <begin position="1"/>
        <end position="17"/>
    </location>
</feature>
<feature type="chain" id="PRO_0000039047" description="Hemagglutinin HA1 chain">
    <location>
        <begin position="18"/>
        <end position="343"/>
    </location>
</feature>
<feature type="glycosylation site" description="N-linked (GlcNAc...) asparagine; by host" evidence="2">
    <location>
        <position position="27"/>
    </location>
</feature>
<feature type="glycosylation site" description="N-linked (GlcNAc...) asparagine; by host" evidence="2">
    <location>
        <position position="28"/>
    </location>
</feature>
<feature type="glycosylation site" description="N-linked (GlcNAc...) asparagine; by host" evidence="2">
    <location>
        <position position="40"/>
    </location>
</feature>
<feature type="glycosylation site" description="N-linked (GlcNAc...) asparagine; by host" evidence="2">
    <location>
        <position position="71"/>
    </location>
</feature>
<feature type="glycosylation site" description="N-linked (GlcNAc...) asparagine; by host" evidence="2">
    <location>
        <position position="104"/>
    </location>
</feature>
<feature type="glycosylation site" description="N-linked (GlcNAc...) asparagine; by host" evidence="2">
    <location>
        <position position="142"/>
    </location>
</feature>
<feature type="glycosylation site" description="N-linked (GlcNAc...) asparagine; by host" evidence="2">
    <location>
        <position position="172"/>
    </location>
</feature>
<feature type="glycosylation site" description="N-linked (GlcNAc...) asparagine; by host" evidence="2">
    <location>
        <position position="286"/>
    </location>
</feature>
<feature type="glycosylation site" description="N-linked (GlcNAc...) asparagine; by host" evidence="2">
    <location>
        <position position="304"/>
    </location>
</feature>
<feature type="disulfide bond" evidence="1">
    <location>
        <begin position="59"/>
        <end position="292"/>
    </location>
</feature>
<feature type="disulfide bond" evidence="1">
    <location>
        <begin position="72"/>
        <end position="84"/>
    </location>
</feature>
<feature type="disulfide bond" evidence="1">
    <location>
        <begin position="107"/>
        <end position="153"/>
    </location>
</feature>
<feature type="disulfide bond" evidence="1">
    <location>
        <begin position="296"/>
        <end position="320"/>
    </location>
</feature>
<feature type="non-terminal residue">
    <location>
        <position position="344"/>
    </location>
</feature>
<name>HEMA_I86A0</name>
<reference key="1">
    <citation type="journal article" date="1987" name="J. Gen. Virol.">
        <title>Sequence analysis of the haemagglutinin of A/Taiwan/1/86, a new variant of human influenza A(H1N1) virus.</title>
        <authorList>
            <person name="Bootman J.S."/>
            <person name="Daniels R."/>
            <person name="Robertson J.S."/>
        </authorList>
    </citation>
    <scope>NUCLEOTIDE SEQUENCE [GENOMIC RNA]</scope>
</reference>
<accession>P12590</accession>
<comment type="function">
    <text>Binds to sialic acid-containing receptors on the cell surface, bringing about the attachment of the virus particle to the cell. This attachment induces virion internalization of about two third of the virus particles through clathrin-dependent endocytosis and about one third through a clathrin- and caveolin-independent pathway. Plays a major role in the determination of host range restriction and virulence. Class I viral fusion protein. Responsible for penetration of the virus into the cell cytoplasm by mediating the fusion of the membrane of the endocytosed virus particle with the endosomal membrane. Low pH in endosomes induces an irreversible conformational change in HA2, releasing the fusion hydrophobic peptide. Several trimers are required to form a competent fusion pore.</text>
</comment>
<comment type="subunit">
    <text>Homotrimer of disulfide-linked HA1-HA2.</text>
</comment>
<comment type="subcellular location">
    <subcellularLocation>
        <location evidence="3">Virion membrane</location>
        <topology evidence="3">Single-pass type I membrane protein</topology>
    </subcellularLocation>
    <subcellularLocation>
        <location>Host apical cell membrane</location>
        <topology>Single-pass type I membrane protein</topology>
    </subcellularLocation>
    <text>Targeted to the apical plasma membrane in epithelial polarized cells through a signal present in the transmembrane domain. Associated with glycosphingolipid- and cholesterol-enriched detergent-resistant lipid rafts.</text>
</comment>
<comment type="PTM">
    <text evidence="1">In natural infection, inactive HA is matured into HA1 and HA2 outside the cell by one or more trypsin-like, arginine-specific endoprotease secreted by the bronchial epithelial cells. One identified protease that may be involved in this process is secreted in lungs by club cells (By similarity).</text>
</comment>
<comment type="PTM">
    <text evidence="1">Palmitoylated.</text>
</comment>
<comment type="miscellaneous">
    <text>Major glycoprotein, comprises over 80% of the envelope proteins present in virus particle.</text>
</comment>
<comment type="miscellaneous">
    <text>The extent of infection into host organism is determined by HA. Influenza viruses bud from the apical surface of polarized epithelial cells (e.g. bronchial epithelial cells) into lumen of lungs and are therefore usually pneumotropic. The reason is that HA is cleaved by tryptase clara which is restricted to lungs. However, HAs of H5 and H7 pantropic avian viruses subtypes can be cleaved by furin and subtilisin-type enzymes, allowing the virus to grow in other organs than lungs.</text>
</comment>
<comment type="miscellaneous">
    <text>The influenza A genome consist of 8 RNA segments. Genetic variation of hemagglutinin and/or neuraminidase genes results in the emergence of new influenza strains. The mechanism of variation can be the result of point mutations or the result of genetic reassortment between segments of two different strains.</text>
</comment>
<comment type="similarity">
    <text evidence="3">Belongs to the influenza viruses hemagglutinin family.</text>
</comment>
<sequence length="344" mass="38434">MKAKLLVLLCAFTATDADTICIGYHANNSTDTVDTVLEKNVTVTHSVNLLEDSHNGKLCRLKGIAPLQLGNCSIAGWILGNPECESLFSKKSWSYIAETPNSENGTCYPGYFADYEELREQLSSVSSFERFEIFPKESSWPNHTVTKGVTAACSHKGKSSFYRNLLWLTEKNGSYPNLSKSYVNNKEKEVLVLWGVHHPSNIGDQRAIYHTENAYVSVVSSHYNRRFTPEIAKRPKVRGQEGRINYYWTLLEPEDTIIFEANGNLIAPWYAFALSRGFGSGIITSNASMDECDAKCQTPQGAINSSLPFQNVHPVTIGECPKYVRSTKLRMVTGLRNIPSIQSR</sequence>